<proteinExistence type="inferred from homology"/>
<protein>
    <recommendedName>
        <fullName>Beta-defensin 5</fullName>
        <shortName>BD-5</shortName>
        <shortName>mBD-5</shortName>
    </recommendedName>
    <alternativeName>
        <fullName>Defensin, beta 5</fullName>
    </alternativeName>
</protein>
<organism>
    <name type="scientific">Mus musculus</name>
    <name type="common">Mouse</name>
    <dbReference type="NCBI Taxonomy" id="10090"/>
    <lineage>
        <taxon>Eukaryota</taxon>
        <taxon>Metazoa</taxon>
        <taxon>Chordata</taxon>
        <taxon>Craniata</taxon>
        <taxon>Vertebrata</taxon>
        <taxon>Euteleostomi</taxon>
        <taxon>Mammalia</taxon>
        <taxon>Eutheria</taxon>
        <taxon>Euarchontoglires</taxon>
        <taxon>Glires</taxon>
        <taxon>Rodentia</taxon>
        <taxon>Myomorpha</taxon>
        <taxon>Muroidea</taxon>
        <taxon>Muridae</taxon>
        <taxon>Murinae</taxon>
        <taxon>Mus</taxon>
        <taxon>Mus</taxon>
    </lineage>
</organism>
<keyword id="KW-0044">Antibiotic</keyword>
<keyword id="KW-0929">Antimicrobial</keyword>
<keyword id="KW-0211">Defensin</keyword>
<keyword id="KW-1015">Disulfide bond</keyword>
<keyword id="KW-1185">Reference proteome</keyword>
<keyword id="KW-0964">Secreted</keyword>
<keyword id="KW-0732">Signal</keyword>
<dbReference type="EMBL" id="AF318068">
    <property type="protein sequence ID" value="AAG49340.1"/>
    <property type="molecule type" value="mRNA"/>
</dbReference>
<dbReference type="EMBL" id="AC163997">
    <property type="status" value="NOT_ANNOTATED_CDS"/>
    <property type="molecule type" value="Genomic_DNA"/>
</dbReference>
<dbReference type="CCDS" id="CCDS40257.1"/>
<dbReference type="RefSeq" id="NP_109659.2">
    <property type="nucleotide sequence ID" value="NM_030734.3"/>
</dbReference>
<dbReference type="SMR" id="Q9EPV9"/>
<dbReference type="FunCoup" id="Q9EPV9">
    <property type="interactions" value="116"/>
</dbReference>
<dbReference type="STRING" id="10090.ENSMUSP00000106391"/>
<dbReference type="PaxDb" id="10090-ENSMUSP00000106391"/>
<dbReference type="DNASU" id="81007"/>
<dbReference type="Ensembl" id="ENSMUST00000110763.2">
    <property type="protein sequence ID" value="ENSMUSP00000106391.2"/>
    <property type="gene ID" value="ENSMUSG00000039785.6"/>
</dbReference>
<dbReference type="GeneID" id="81007"/>
<dbReference type="KEGG" id="mmu:81007"/>
<dbReference type="UCSC" id="uc009lan.1">
    <property type="organism name" value="mouse"/>
</dbReference>
<dbReference type="AGR" id="MGI:1933153"/>
<dbReference type="CTD" id="81007"/>
<dbReference type="MGI" id="MGI:1933153">
    <property type="gene designation" value="Defb5"/>
</dbReference>
<dbReference type="VEuPathDB" id="HostDB:ENSMUSG00000039785"/>
<dbReference type="GeneTree" id="ENSGT01030000235924"/>
<dbReference type="HOGENOM" id="CLU_189296_4_1_1"/>
<dbReference type="InParanoid" id="Q9EPV9"/>
<dbReference type="PhylomeDB" id="Q9EPV9"/>
<dbReference type="BioGRID-ORCS" id="81007">
    <property type="hits" value="0 hits in 74 CRISPR screens"/>
</dbReference>
<dbReference type="PRO" id="PR:Q9EPV9"/>
<dbReference type="Proteomes" id="UP000000589">
    <property type="component" value="Chromosome 8"/>
</dbReference>
<dbReference type="RNAct" id="Q9EPV9">
    <property type="molecule type" value="protein"/>
</dbReference>
<dbReference type="Bgee" id="ENSMUSG00000039785">
    <property type="expression patterns" value="Expressed in embryonic cell in blastocyst and 4 other cell types or tissues"/>
</dbReference>
<dbReference type="GO" id="GO:0005576">
    <property type="term" value="C:extracellular region"/>
    <property type="evidence" value="ECO:0007669"/>
    <property type="project" value="UniProtKB-SubCell"/>
</dbReference>
<dbReference type="GO" id="GO:0042742">
    <property type="term" value="P:defense response to bacterium"/>
    <property type="evidence" value="ECO:0007669"/>
    <property type="project" value="UniProtKB-KW"/>
</dbReference>
<dbReference type="FunFam" id="3.10.360.10:FF:000001">
    <property type="entry name" value="Beta-defensin 1"/>
    <property type="match status" value="1"/>
</dbReference>
<dbReference type="Gene3D" id="3.10.360.10">
    <property type="entry name" value="Antimicrobial Peptide, Beta-defensin 2, Chain A"/>
    <property type="match status" value="1"/>
</dbReference>
<dbReference type="InterPro" id="IPR001855">
    <property type="entry name" value="Defensin_beta-like"/>
</dbReference>
<dbReference type="PANTHER" id="PTHR20515">
    <property type="entry name" value="BETA-DEFENSIN"/>
    <property type="match status" value="1"/>
</dbReference>
<dbReference type="PANTHER" id="PTHR20515:SF2">
    <property type="entry name" value="DEFENSIN BETA 4A"/>
    <property type="match status" value="1"/>
</dbReference>
<dbReference type="Pfam" id="PF00711">
    <property type="entry name" value="Defensin_beta"/>
    <property type="match status" value="1"/>
</dbReference>
<dbReference type="SUPFAM" id="SSF57392">
    <property type="entry name" value="Defensin-like"/>
    <property type="match status" value="1"/>
</dbReference>
<accession>Q9EPV9</accession>
<accession>F8VQA5</accession>
<gene>
    <name type="primary">Defb5</name>
</gene>
<evidence type="ECO:0000250" key="1"/>
<evidence type="ECO:0000255" key="2"/>
<evidence type="ECO:0000305" key="3"/>
<name>DEFB5_MOUSE</name>
<feature type="signal peptide" evidence="2">
    <location>
        <begin position="1"/>
        <end position="23"/>
    </location>
</feature>
<feature type="chain" id="PRO_0000006931" description="Beta-defensin 5">
    <location>
        <begin position="24"/>
        <end position="64"/>
    </location>
</feature>
<feature type="disulfide bond" evidence="1">
    <location>
        <begin position="32"/>
        <end position="60"/>
    </location>
</feature>
<feature type="disulfide bond" evidence="1">
    <location>
        <begin position="39"/>
        <end position="53"/>
    </location>
</feature>
<feature type="disulfide bond" evidence="1">
    <location>
        <begin position="43"/>
        <end position="61"/>
    </location>
</feature>
<feature type="sequence conflict" description="In Ref. 1; AAG49340." evidence="3" ref="1">
    <original>K</original>
    <variation>R</variation>
    <location>
        <position position="2"/>
    </location>
</feature>
<feature type="sequence conflict" description="In Ref. 1; AAG49340." evidence="3" ref="1">
    <original>S</original>
    <variation>C</variation>
    <location>
        <position position="16"/>
    </location>
</feature>
<feature type="sequence conflict" description="In Ref. 1; AAG49340." evidence="3" ref="1">
    <original>GV</original>
    <variation>SD</variation>
    <location>
        <begin position="20"/>
        <end position="21"/>
    </location>
</feature>
<feature type="sequence conflict" description="In Ref. 1; AAG49340." evidence="3" ref="1">
    <original>S</original>
    <variation>N</variation>
    <location>
        <position position="52"/>
    </location>
</feature>
<reference key="1">
    <citation type="submission" date="2000-11" db="EMBL/GenBank/DDBJ databases">
        <title>EST and genomic database mining yield novel human and mouse beta-defensins.</title>
        <authorList>
            <person name="Adler D.A."/>
            <person name="Holloway J.L."/>
            <person name="Haldeman B.E."/>
            <person name="Rixon M."/>
            <person name="Jaspers S."/>
            <person name="Fox B."/>
            <person name="Gosink J."/>
            <person name="Sheppard P."/>
            <person name="Presnell S."/>
            <person name="Gao Z."/>
            <person name="Whitmore T."/>
            <person name="Stamm M."/>
            <person name="Laube D."/>
            <person name="Diamond G."/>
        </authorList>
    </citation>
    <scope>NUCLEOTIDE SEQUENCE [MRNA]</scope>
</reference>
<reference key="2">
    <citation type="journal article" date="2009" name="PLoS Biol.">
        <title>Lineage-specific biology revealed by a finished genome assembly of the mouse.</title>
        <authorList>
            <person name="Church D.M."/>
            <person name="Goodstadt L."/>
            <person name="Hillier L.W."/>
            <person name="Zody M.C."/>
            <person name="Goldstein S."/>
            <person name="She X."/>
            <person name="Bult C.J."/>
            <person name="Agarwala R."/>
            <person name="Cherry J.L."/>
            <person name="DiCuccio M."/>
            <person name="Hlavina W."/>
            <person name="Kapustin Y."/>
            <person name="Meric P."/>
            <person name="Maglott D."/>
            <person name="Birtle Z."/>
            <person name="Marques A.C."/>
            <person name="Graves T."/>
            <person name="Zhou S."/>
            <person name="Teague B."/>
            <person name="Potamousis K."/>
            <person name="Churas C."/>
            <person name="Place M."/>
            <person name="Herschleb J."/>
            <person name="Runnheim R."/>
            <person name="Forrest D."/>
            <person name="Amos-Landgraf J."/>
            <person name="Schwartz D.C."/>
            <person name="Cheng Z."/>
            <person name="Lindblad-Toh K."/>
            <person name="Eichler E.E."/>
            <person name="Ponting C.P."/>
        </authorList>
    </citation>
    <scope>NUCLEOTIDE SEQUENCE [LARGE SCALE GENOMIC DNA]</scope>
    <source>
        <strain>C57BL/6J</strain>
    </source>
</reference>
<sequence length="64" mass="6970">MKIHYLLFAFLLVLLSPLAGVFSKTINNPVSCCMIGGICRYLCKGNILQNGSCGVTSLNCCKRK</sequence>
<comment type="function">
    <text evidence="1">Has antibacterial activity.</text>
</comment>
<comment type="subcellular location">
    <subcellularLocation>
        <location evidence="1">Secreted</location>
    </subcellularLocation>
</comment>
<comment type="similarity">
    <text evidence="3">Belongs to the beta-defensin family.</text>
</comment>